<reference key="1">
    <citation type="journal article" date="2005" name="Science">
        <title>The transcriptional landscape of the mammalian genome.</title>
        <authorList>
            <person name="Carninci P."/>
            <person name="Kasukawa T."/>
            <person name="Katayama S."/>
            <person name="Gough J."/>
            <person name="Frith M.C."/>
            <person name="Maeda N."/>
            <person name="Oyama R."/>
            <person name="Ravasi T."/>
            <person name="Lenhard B."/>
            <person name="Wells C."/>
            <person name="Kodzius R."/>
            <person name="Shimokawa K."/>
            <person name="Bajic V.B."/>
            <person name="Brenner S.E."/>
            <person name="Batalov S."/>
            <person name="Forrest A.R."/>
            <person name="Zavolan M."/>
            <person name="Davis M.J."/>
            <person name="Wilming L.G."/>
            <person name="Aidinis V."/>
            <person name="Allen J.E."/>
            <person name="Ambesi-Impiombato A."/>
            <person name="Apweiler R."/>
            <person name="Aturaliya R.N."/>
            <person name="Bailey T.L."/>
            <person name="Bansal M."/>
            <person name="Baxter L."/>
            <person name="Beisel K.W."/>
            <person name="Bersano T."/>
            <person name="Bono H."/>
            <person name="Chalk A.M."/>
            <person name="Chiu K.P."/>
            <person name="Choudhary V."/>
            <person name="Christoffels A."/>
            <person name="Clutterbuck D.R."/>
            <person name="Crowe M.L."/>
            <person name="Dalla E."/>
            <person name="Dalrymple B.P."/>
            <person name="de Bono B."/>
            <person name="Della Gatta G."/>
            <person name="di Bernardo D."/>
            <person name="Down T."/>
            <person name="Engstrom P."/>
            <person name="Fagiolini M."/>
            <person name="Faulkner G."/>
            <person name="Fletcher C.F."/>
            <person name="Fukushima T."/>
            <person name="Furuno M."/>
            <person name="Futaki S."/>
            <person name="Gariboldi M."/>
            <person name="Georgii-Hemming P."/>
            <person name="Gingeras T.R."/>
            <person name="Gojobori T."/>
            <person name="Green R.E."/>
            <person name="Gustincich S."/>
            <person name="Harbers M."/>
            <person name="Hayashi Y."/>
            <person name="Hensch T.K."/>
            <person name="Hirokawa N."/>
            <person name="Hill D."/>
            <person name="Huminiecki L."/>
            <person name="Iacono M."/>
            <person name="Ikeo K."/>
            <person name="Iwama A."/>
            <person name="Ishikawa T."/>
            <person name="Jakt M."/>
            <person name="Kanapin A."/>
            <person name="Katoh M."/>
            <person name="Kawasawa Y."/>
            <person name="Kelso J."/>
            <person name="Kitamura H."/>
            <person name="Kitano H."/>
            <person name="Kollias G."/>
            <person name="Krishnan S.P."/>
            <person name="Kruger A."/>
            <person name="Kummerfeld S.K."/>
            <person name="Kurochkin I.V."/>
            <person name="Lareau L.F."/>
            <person name="Lazarevic D."/>
            <person name="Lipovich L."/>
            <person name="Liu J."/>
            <person name="Liuni S."/>
            <person name="McWilliam S."/>
            <person name="Madan Babu M."/>
            <person name="Madera M."/>
            <person name="Marchionni L."/>
            <person name="Matsuda H."/>
            <person name="Matsuzawa S."/>
            <person name="Miki H."/>
            <person name="Mignone F."/>
            <person name="Miyake S."/>
            <person name="Morris K."/>
            <person name="Mottagui-Tabar S."/>
            <person name="Mulder N."/>
            <person name="Nakano N."/>
            <person name="Nakauchi H."/>
            <person name="Ng P."/>
            <person name="Nilsson R."/>
            <person name="Nishiguchi S."/>
            <person name="Nishikawa S."/>
            <person name="Nori F."/>
            <person name="Ohara O."/>
            <person name="Okazaki Y."/>
            <person name="Orlando V."/>
            <person name="Pang K.C."/>
            <person name="Pavan W.J."/>
            <person name="Pavesi G."/>
            <person name="Pesole G."/>
            <person name="Petrovsky N."/>
            <person name="Piazza S."/>
            <person name="Reed J."/>
            <person name="Reid J.F."/>
            <person name="Ring B.Z."/>
            <person name="Ringwald M."/>
            <person name="Rost B."/>
            <person name="Ruan Y."/>
            <person name="Salzberg S.L."/>
            <person name="Sandelin A."/>
            <person name="Schneider C."/>
            <person name="Schoenbach C."/>
            <person name="Sekiguchi K."/>
            <person name="Semple C.A."/>
            <person name="Seno S."/>
            <person name="Sessa L."/>
            <person name="Sheng Y."/>
            <person name="Shibata Y."/>
            <person name="Shimada H."/>
            <person name="Shimada K."/>
            <person name="Silva D."/>
            <person name="Sinclair B."/>
            <person name="Sperling S."/>
            <person name="Stupka E."/>
            <person name="Sugiura K."/>
            <person name="Sultana R."/>
            <person name="Takenaka Y."/>
            <person name="Taki K."/>
            <person name="Tammoja K."/>
            <person name="Tan S.L."/>
            <person name="Tang S."/>
            <person name="Taylor M.S."/>
            <person name="Tegner J."/>
            <person name="Teichmann S.A."/>
            <person name="Ueda H.R."/>
            <person name="van Nimwegen E."/>
            <person name="Verardo R."/>
            <person name="Wei C.L."/>
            <person name="Yagi K."/>
            <person name="Yamanishi H."/>
            <person name="Zabarovsky E."/>
            <person name="Zhu S."/>
            <person name="Zimmer A."/>
            <person name="Hide W."/>
            <person name="Bult C."/>
            <person name="Grimmond S.M."/>
            <person name="Teasdale R.D."/>
            <person name="Liu E.T."/>
            <person name="Brusic V."/>
            <person name="Quackenbush J."/>
            <person name="Wahlestedt C."/>
            <person name="Mattick J.S."/>
            <person name="Hume D.A."/>
            <person name="Kai C."/>
            <person name="Sasaki D."/>
            <person name="Tomaru Y."/>
            <person name="Fukuda S."/>
            <person name="Kanamori-Katayama M."/>
            <person name="Suzuki M."/>
            <person name="Aoki J."/>
            <person name="Arakawa T."/>
            <person name="Iida J."/>
            <person name="Imamura K."/>
            <person name="Itoh M."/>
            <person name="Kato T."/>
            <person name="Kawaji H."/>
            <person name="Kawagashira N."/>
            <person name="Kawashima T."/>
            <person name="Kojima M."/>
            <person name="Kondo S."/>
            <person name="Konno H."/>
            <person name="Nakano K."/>
            <person name="Ninomiya N."/>
            <person name="Nishio T."/>
            <person name="Okada M."/>
            <person name="Plessy C."/>
            <person name="Shibata K."/>
            <person name="Shiraki T."/>
            <person name="Suzuki S."/>
            <person name="Tagami M."/>
            <person name="Waki K."/>
            <person name="Watahiki A."/>
            <person name="Okamura-Oho Y."/>
            <person name="Suzuki H."/>
            <person name="Kawai J."/>
            <person name="Hayashizaki Y."/>
        </authorList>
    </citation>
    <scope>NUCLEOTIDE SEQUENCE [LARGE SCALE MRNA] (ISOFORM 2)</scope>
    <source>
        <strain>C57BL/6J</strain>
        <tissue>Cerebellum</tissue>
    </source>
</reference>
<reference key="2">
    <citation type="journal article" date="2004" name="Genome Res.">
        <title>The status, quality, and expansion of the NIH full-length cDNA project: the Mammalian Gene Collection (MGC).</title>
        <authorList>
            <consortium name="The MGC Project Team"/>
        </authorList>
    </citation>
    <scope>NUCLEOTIDE SEQUENCE [LARGE SCALE MRNA] (ISOFORM 1)</scope>
    <source>
        <tissue>Olfactory epithelium</tissue>
    </source>
</reference>
<proteinExistence type="inferred from homology"/>
<keyword id="KW-0025">Alternative splicing</keyword>
<keyword id="KW-1185">Reference proteome</keyword>
<evidence type="ECO:0000303" key="1">
    <source>
    </source>
</evidence>
<evidence type="ECO:0000305" key="2"/>
<comment type="alternative products">
    <event type="alternative splicing"/>
    <isoform>
        <id>Q4VAB4-1</id>
        <name>1</name>
        <sequence type="displayed"/>
    </isoform>
    <isoform>
        <id>Q4VAB4-2</id>
        <name>2</name>
        <sequence type="described" ref="VSP_030193"/>
    </isoform>
</comment>
<comment type="similarity">
    <text evidence="2">Belongs to the canopy family.</text>
</comment>
<protein>
    <recommendedName>
        <fullName>Protein canopy homolog 1</fullName>
    </recommendedName>
</protein>
<feature type="chain" id="PRO_0000314016" description="Protein canopy homolog 1">
    <location>
        <begin position="1"/>
        <end position="94"/>
    </location>
</feature>
<feature type="splice variant" id="VSP_030193" description="In isoform 2." evidence="1">
    <original>DLCGTPTNSPEP</original>
    <variation>GTVSDVTRAPSLTYQLQLSLAQLIHRVAWLSYCQPGSTQTSGDQTPMPERRATEPHARAFLMTFLLCLCFFVFVCFPKNVGLTLPLIFRAG</variation>
    <location>
        <begin position="83"/>
        <end position="94"/>
    </location>
</feature>
<accession>Q4VAB4</accession>
<accession>Q8CBK9</accession>
<sequence>MRMNDYQLEDDPVTKQKYFRRYAPRKGDKIYKEYKKFFFYSDAFRPLKFACEAIIEKYEDEIFELIAQEANHLADMLCNEKSDLCGTPTNSPEP</sequence>
<dbReference type="EMBL" id="AK035828">
    <property type="protein sequence ID" value="BAC29203.1"/>
    <property type="molecule type" value="mRNA"/>
</dbReference>
<dbReference type="EMBL" id="AK139155">
    <property type="protein sequence ID" value="BAE23904.1"/>
    <property type="molecule type" value="mRNA"/>
</dbReference>
<dbReference type="EMBL" id="BC096464">
    <property type="protein sequence ID" value="AAH96464.1"/>
    <property type="molecule type" value="mRNA"/>
</dbReference>
<dbReference type="CCDS" id="CCDS80237.1">
    <molecule id="Q4VAB4-1"/>
</dbReference>
<dbReference type="RefSeq" id="NP_001297440.1">
    <molecule id="Q4VAB4-1"/>
    <property type="nucleotide sequence ID" value="NM_001310511.1"/>
</dbReference>
<dbReference type="RefSeq" id="NP_001297441.1">
    <molecule id="Q4VAB4-1"/>
    <property type="nucleotide sequence ID" value="NM_001310512.1"/>
</dbReference>
<dbReference type="SMR" id="Q4VAB4"/>
<dbReference type="STRING" id="10090.ENSMUSP00000113944"/>
<dbReference type="PaxDb" id="10090-ENSMUSP00000112773"/>
<dbReference type="Antibodypedia" id="49629">
    <property type="antibodies" value="10 antibodies from 8 providers"/>
</dbReference>
<dbReference type="Ensembl" id="ENSMUST00000117098.2">
    <molecule id="Q4VAB4-2"/>
    <property type="protein sequence ID" value="ENSMUSP00000113956.2"/>
    <property type="gene ID" value="ENSMUSG00000044681.20"/>
</dbReference>
<dbReference type="Ensembl" id="ENSMUST00000118882.2">
    <molecule id="Q4VAB4-1"/>
    <property type="protein sequence ID" value="ENSMUSP00000113944.2"/>
    <property type="gene ID" value="ENSMUSG00000044681.20"/>
</dbReference>
<dbReference type="Ensembl" id="ENSMUST00000120068.2">
    <molecule id="Q4VAB4-2"/>
    <property type="protein sequence ID" value="ENSMUSP00000112773.2"/>
    <property type="gene ID" value="ENSMUSG00000044681.20"/>
</dbReference>
<dbReference type="GeneID" id="269637"/>
<dbReference type="KEGG" id="mmu:269637"/>
<dbReference type="UCSC" id="uc008wtw.1">
    <molecule id="Q4VAB4-1"/>
    <property type="organism name" value="mouse"/>
</dbReference>
<dbReference type="UCSC" id="uc008wtx.1">
    <molecule id="Q4VAB4-2"/>
    <property type="organism name" value="mouse"/>
</dbReference>
<dbReference type="AGR" id="MGI:2442451"/>
<dbReference type="CTD" id="285888"/>
<dbReference type="MGI" id="MGI:2442451">
    <property type="gene designation" value="Cnpy1"/>
</dbReference>
<dbReference type="VEuPathDB" id="HostDB:ENSMUSG00000044681"/>
<dbReference type="eggNOG" id="KOG3782">
    <property type="taxonomic scope" value="Eukaryota"/>
</dbReference>
<dbReference type="GeneTree" id="ENSGT00940000161119"/>
<dbReference type="HOGENOM" id="CLU_1558921_0_0_1"/>
<dbReference type="InParanoid" id="Q4VAB4"/>
<dbReference type="OrthoDB" id="13221at9989"/>
<dbReference type="BioGRID-ORCS" id="269637">
    <property type="hits" value="4 hits in 78 CRISPR screens"/>
</dbReference>
<dbReference type="PRO" id="PR:Q4VAB4"/>
<dbReference type="Proteomes" id="UP000000589">
    <property type="component" value="Chromosome 5"/>
</dbReference>
<dbReference type="RNAct" id="Q4VAB4">
    <property type="molecule type" value="protein"/>
</dbReference>
<dbReference type="Bgee" id="ENSMUSG00000044681">
    <property type="expression patterns" value="Expressed in cerebellum lobe and 71 other cell types or tissues"/>
</dbReference>
<dbReference type="ExpressionAtlas" id="Q4VAB4">
    <property type="expression patterns" value="baseline and differential"/>
</dbReference>
<dbReference type="InterPro" id="IPR042415">
    <property type="entry name" value="CNPY"/>
</dbReference>
<dbReference type="InterPro" id="IPR021852">
    <property type="entry name" value="DUF3456"/>
</dbReference>
<dbReference type="PANTHER" id="PTHR13341:SF4">
    <property type="entry name" value="CANOPY FGF SIGNALING REGULATOR 1"/>
    <property type="match status" value="1"/>
</dbReference>
<dbReference type="PANTHER" id="PTHR13341">
    <property type="entry name" value="MIR-INTERACTING SAPOSIN-LIKE PROTEIN"/>
    <property type="match status" value="1"/>
</dbReference>
<dbReference type="Pfam" id="PF11938">
    <property type="entry name" value="DUF3456"/>
    <property type="match status" value="1"/>
</dbReference>
<organism>
    <name type="scientific">Mus musculus</name>
    <name type="common">Mouse</name>
    <dbReference type="NCBI Taxonomy" id="10090"/>
    <lineage>
        <taxon>Eukaryota</taxon>
        <taxon>Metazoa</taxon>
        <taxon>Chordata</taxon>
        <taxon>Craniata</taxon>
        <taxon>Vertebrata</taxon>
        <taxon>Euteleostomi</taxon>
        <taxon>Mammalia</taxon>
        <taxon>Eutheria</taxon>
        <taxon>Euarchontoglires</taxon>
        <taxon>Glires</taxon>
        <taxon>Rodentia</taxon>
        <taxon>Myomorpha</taxon>
        <taxon>Muroidea</taxon>
        <taxon>Muridae</taxon>
        <taxon>Murinae</taxon>
        <taxon>Mus</taxon>
        <taxon>Mus</taxon>
    </lineage>
</organism>
<gene>
    <name type="primary">Cnpy1</name>
</gene>
<name>CNPY1_MOUSE</name>